<evidence type="ECO:0000255" key="1">
    <source>
        <dbReference type="HAMAP-Rule" id="MF_00551"/>
    </source>
</evidence>
<organism>
    <name type="scientific">Deinococcus radiodurans (strain ATCC 13939 / DSM 20539 / JCM 16871 / CCUG 27074 / LMG 4051 / NBRC 15346 / NCIMB 9279 / VKM B-1422 / R1)</name>
    <dbReference type="NCBI Taxonomy" id="243230"/>
    <lineage>
        <taxon>Bacteria</taxon>
        <taxon>Thermotogati</taxon>
        <taxon>Deinococcota</taxon>
        <taxon>Deinococci</taxon>
        <taxon>Deinococcales</taxon>
        <taxon>Deinococcaceae</taxon>
        <taxon>Deinococcus</taxon>
    </lineage>
</organism>
<proteinExistence type="inferred from homology"/>
<protein>
    <recommendedName>
        <fullName evidence="1">Uridine kinase</fullName>
        <ecNumber evidence="1">2.7.1.48</ecNumber>
    </recommendedName>
    <alternativeName>
        <fullName evidence="1">Cytidine monophosphokinase</fullName>
    </alternativeName>
    <alternativeName>
        <fullName evidence="1">Uridine monophosphokinase</fullName>
    </alternativeName>
</protein>
<keyword id="KW-0067">ATP-binding</keyword>
<keyword id="KW-0963">Cytoplasm</keyword>
<keyword id="KW-0418">Kinase</keyword>
<keyword id="KW-0547">Nucleotide-binding</keyword>
<keyword id="KW-1185">Reference proteome</keyword>
<keyword id="KW-0808">Transferase</keyword>
<comment type="catalytic activity">
    <reaction evidence="1">
        <text>uridine + ATP = UMP + ADP + H(+)</text>
        <dbReference type="Rhea" id="RHEA:16825"/>
        <dbReference type="ChEBI" id="CHEBI:15378"/>
        <dbReference type="ChEBI" id="CHEBI:16704"/>
        <dbReference type="ChEBI" id="CHEBI:30616"/>
        <dbReference type="ChEBI" id="CHEBI:57865"/>
        <dbReference type="ChEBI" id="CHEBI:456216"/>
        <dbReference type="EC" id="2.7.1.48"/>
    </reaction>
</comment>
<comment type="catalytic activity">
    <reaction evidence="1">
        <text>cytidine + ATP = CMP + ADP + H(+)</text>
        <dbReference type="Rhea" id="RHEA:24674"/>
        <dbReference type="ChEBI" id="CHEBI:15378"/>
        <dbReference type="ChEBI" id="CHEBI:17562"/>
        <dbReference type="ChEBI" id="CHEBI:30616"/>
        <dbReference type="ChEBI" id="CHEBI:60377"/>
        <dbReference type="ChEBI" id="CHEBI:456216"/>
        <dbReference type="EC" id="2.7.1.48"/>
    </reaction>
</comment>
<comment type="pathway">
    <text evidence="1">Pyrimidine metabolism; CTP biosynthesis via salvage pathway; CTP from cytidine: step 1/3.</text>
</comment>
<comment type="pathway">
    <text evidence="1">Pyrimidine metabolism; UMP biosynthesis via salvage pathway; UMP from uridine: step 1/1.</text>
</comment>
<comment type="subcellular location">
    <subcellularLocation>
        <location evidence="1">Cytoplasm</location>
    </subcellularLocation>
</comment>
<comment type="similarity">
    <text evidence="1">Belongs to the uridine kinase family.</text>
</comment>
<feature type="chain" id="PRO_0000164469" description="Uridine kinase">
    <location>
        <begin position="1"/>
        <end position="210"/>
    </location>
</feature>
<feature type="binding site" evidence="1">
    <location>
        <begin position="14"/>
        <end position="21"/>
    </location>
    <ligand>
        <name>ATP</name>
        <dbReference type="ChEBI" id="CHEBI:30616"/>
    </ligand>
</feature>
<name>URK_DEIRA</name>
<gene>
    <name evidence="1" type="primary">udk</name>
    <name type="ordered locus">DR_0159</name>
</gene>
<dbReference type="EC" id="2.7.1.48" evidence="1"/>
<dbReference type="EMBL" id="AE000513">
    <property type="protein sequence ID" value="AAF09747.1"/>
    <property type="molecule type" value="Genomic_DNA"/>
</dbReference>
<dbReference type="PIR" id="E75553">
    <property type="entry name" value="E75553"/>
</dbReference>
<dbReference type="RefSeq" id="NP_293883.1">
    <property type="nucleotide sequence ID" value="NC_001263.1"/>
</dbReference>
<dbReference type="RefSeq" id="WP_010886805.1">
    <property type="nucleotide sequence ID" value="NC_001263.1"/>
</dbReference>
<dbReference type="SMR" id="Q9RXZ5"/>
<dbReference type="FunCoup" id="Q9RXZ5">
    <property type="interactions" value="249"/>
</dbReference>
<dbReference type="STRING" id="243230.DR_0159"/>
<dbReference type="PaxDb" id="243230-DR_0159"/>
<dbReference type="EnsemblBacteria" id="AAF09747">
    <property type="protein sequence ID" value="AAF09747"/>
    <property type="gene ID" value="DR_0159"/>
</dbReference>
<dbReference type="GeneID" id="69516390"/>
<dbReference type="KEGG" id="dra:DR_0159"/>
<dbReference type="PATRIC" id="fig|243230.17.peg.324"/>
<dbReference type="eggNOG" id="COG0572">
    <property type="taxonomic scope" value="Bacteria"/>
</dbReference>
<dbReference type="HOGENOM" id="CLU_021278_1_2_0"/>
<dbReference type="InParanoid" id="Q9RXZ5"/>
<dbReference type="OrthoDB" id="9777642at2"/>
<dbReference type="UniPathway" id="UPA00574">
    <property type="reaction ID" value="UER00637"/>
</dbReference>
<dbReference type="UniPathway" id="UPA00579">
    <property type="reaction ID" value="UER00640"/>
</dbReference>
<dbReference type="Proteomes" id="UP000002524">
    <property type="component" value="Chromosome 1"/>
</dbReference>
<dbReference type="GO" id="GO:0005737">
    <property type="term" value="C:cytoplasm"/>
    <property type="evidence" value="ECO:0000318"/>
    <property type="project" value="GO_Central"/>
</dbReference>
<dbReference type="GO" id="GO:0005524">
    <property type="term" value="F:ATP binding"/>
    <property type="evidence" value="ECO:0007669"/>
    <property type="project" value="UniProtKB-UniRule"/>
</dbReference>
<dbReference type="GO" id="GO:0043771">
    <property type="term" value="F:cytidine kinase activity"/>
    <property type="evidence" value="ECO:0007669"/>
    <property type="project" value="RHEA"/>
</dbReference>
<dbReference type="GO" id="GO:0004849">
    <property type="term" value="F:uridine kinase activity"/>
    <property type="evidence" value="ECO:0007669"/>
    <property type="project" value="UniProtKB-UniRule"/>
</dbReference>
<dbReference type="GO" id="GO:0044211">
    <property type="term" value="P:CTP salvage"/>
    <property type="evidence" value="ECO:0007669"/>
    <property type="project" value="UniProtKB-UniRule"/>
</dbReference>
<dbReference type="GO" id="GO:0044206">
    <property type="term" value="P:UMP salvage"/>
    <property type="evidence" value="ECO:0007669"/>
    <property type="project" value="UniProtKB-UniRule"/>
</dbReference>
<dbReference type="CDD" id="cd02023">
    <property type="entry name" value="UMPK"/>
    <property type="match status" value="1"/>
</dbReference>
<dbReference type="Gene3D" id="3.40.50.300">
    <property type="entry name" value="P-loop containing nucleotide triphosphate hydrolases"/>
    <property type="match status" value="1"/>
</dbReference>
<dbReference type="HAMAP" id="MF_00551">
    <property type="entry name" value="Uridine_kinase"/>
    <property type="match status" value="1"/>
</dbReference>
<dbReference type="InterPro" id="IPR027417">
    <property type="entry name" value="P-loop_NTPase"/>
</dbReference>
<dbReference type="InterPro" id="IPR006083">
    <property type="entry name" value="PRK/URK"/>
</dbReference>
<dbReference type="InterPro" id="IPR026008">
    <property type="entry name" value="Uridine_kinase"/>
</dbReference>
<dbReference type="InterPro" id="IPR000764">
    <property type="entry name" value="Uridine_kinase-like"/>
</dbReference>
<dbReference type="NCBIfam" id="NF004018">
    <property type="entry name" value="PRK05480.1"/>
    <property type="match status" value="1"/>
</dbReference>
<dbReference type="NCBIfam" id="TIGR00235">
    <property type="entry name" value="udk"/>
    <property type="match status" value="1"/>
</dbReference>
<dbReference type="PANTHER" id="PTHR10285">
    <property type="entry name" value="URIDINE KINASE"/>
    <property type="match status" value="1"/>
</dbReference>
<dbReference type="Pfam" id="PF00485">
    <property type="entry name" value="PRK"/>
    <property type="match status" value="1"/>
</dbReference>
<dbReference type="PRINTS" id="PR00988">
    <property type="entry name" value="URIDINKINASE"/>
</dbReference>
<dbReference type="SUPFAM" id="SSF52540">
    <property type="entry name" value="P-loop containing nucleoside triphosphate hydrolases"/>
    <property type="match status" value="1"/>
</dbReference>
<accession>Q9RXZ5</accession>
<sequence length="210" mass="23660">MSGPGTPFVIGVAGGSGSGKTTVTRRVIETVGREGVAVLNQDNYYRDQSDIPFESRLHTNYDHPAAFDWALLREQLDALLAGVPIEMPEYDFTQHTRAAHTTRVLPGRVVVLEGFFALYDEELRSRMGLKVFVDADADVRFIRRLLRDTQERGRTPESVIEQYLGFVRPMHLSFVEPTKRYADVIIPHGGMNEPALDMLAARIRVMAQRD</sequence>
<reference key="1">
    <citation type="journal article" date="1999" name="Science">
        <title>Genome sequence of the radioresistant bacterium Deinococcus radiodurans R1.</title>
        <authorList>
            <person name="White O."/>
            <person name="Eisen J.A."/>
            <person name="Heidelberg J.F."/>
            <person name="Hickey E.K."/>
            <person name="Peterson J.D."/>
            <person name="Dodson R.J."/>
            <person name="Haft D.H."/>
            <person name="Gwinn M.L."/>
            <person name="Nelson W.C."/>
            <person name="Richardson D.L."/>
            <person name="Moffat K.S."/>
            <person name="Qin H."/>
            <person name="Jiang L."/>
            <person name="Pamphile W."/>
            <person name="Crosby M."/>
            <person name="Shen M."/>
            <person name="Vamathevan J.J."/>
            <person name="Lam P."/>
            <person name="McDonald L.A."/>
            <person name="Utterback T.R."/>
            <person name="Zalewski C."/>
            <person name="Makarova K.S."/>
            <person name="Aravind L."/>
            <person name="Daly M.J."/>
            <person name="Minton K.W."/>
            <person name="Fleischmann R.D."/>
            <person name="Ketchum K.A."/>
            <person name="Nelson K.E."/>
            <person name="Salzberg S.L."/>
            <person name="Smith H.O."/>
            <person name="Venter J.C."/>
            <person name="Fraser C.M."/>
        </authorList>
    </citation>
    <scope>NUCLEOTIDE SEQUENCE [LARGE SCALE GENOMIC DNA]</scope>
    <source>
        <strain>ATCC 13939 / DSM 20539 / JCM 16871 / CCUG 27074 / LMG 4051 / NBRC 15346 / NCIMB 9279 / VKM B-1422 / R1</strain>
    </source>
</reference>